<organismHost>
    <name type="scientific">Acanthamoeba polyphaga</name>
    <name type="common">Amoeba</name>
    <dbReference type="NCBI Taxonomy" id="5757"/>
</organismHost>
<gene>
    <name type="ordered locus">MIMI_L295</name>
</gene>
<proteinExistence type="predicted"/>
<keyword id="KW-1185">Reference proteome</keyword>
<feature type="chain" id="PRO_0000071261" description="Uncharacterized protein L295">
    <location>
        <begin position="1"/>
        <end position="197"/>
    </location>
</feature>
<protein>
    <recommendedName>
        <fullName>Uncharacterized protein L295</fullName>
    </recommendedName>
</protein>
<dbReference type="EMBL" id="AY653733">
    <property type="protein sequence ID" value="AAV50567.1"/>
    <property type="molecule type" value="Genomic_DNA"/>
</dbReference>
<dbReference type="KEGG" id="vg:9924910"/>
<dbReference type="Proteomes" id="UP000001134">
    <property type="component" value="Genome"/>
</dbReference>
<name>YL295_MIMIV</name>
<reference key="1">
    <citation type="journal article" date="2004" name="Science">
        <title>The 1.2-megabase genome sequence of Mimivirus.</title>
        <authorList>
            <person name="Raoult D."/>
            <person name="Audic S."/>
            <person name="Robert C."/>
            <person name="Abergel C."/>
            <person name="Renesto P."/>
            <person name="Ogata H."/>
            <person name="La Scola B."/>
            <person name="Susan M."/>
            <person name="Claverie J.-M."/>
        </authorList>
    </citation>
    <scope>NUCLEOTIDE SEQUENCE [LARGE SCALE GENOMIC DNA]</scope>
    <source>
        <strain>Rowbotham-Bradford</strain>
    </source>
</reference>
<sequence length="197" mass="23138">MCLPILVVMDSIINIDRVQIFIFDCINFLINDISLCYKIGIMNFLSPIFSTEIKSSEIKSNLMELDLSENYEQIIHNFVQYYRIINLFGVSYSEKYYNEQIHGFPNHYSIHLSGNISGKYRLDNYKSFLSKFNELGIKNIHYNNTNFYYQLINPKCISLVMFGSVYHQNKLCNIISVINLRVIHNIPKIINHMVIIT</sequence>
<organism>
    <name type="scientific">Acanthamoeba polyphaga mimivirus</name>
    <name type="common">APMV</name>
    <dbReference type="NCBI Taxonomy" id="212035"/>
    <lineage>
        <taxon>Viruses</taxon>
        <taxon>Varidnaviria</taxon>
        <taxon>Bamfordvirae</taxon>
        <taxon>Nucleocytoviricota</taxon>
        <taxon>Megaviricetes</taxon>
        <taxon>Imitervirales</taxon>
        <taxon>Mimiviridae</taxon>
        <taxon>Megamimivirinae</taxon>
        <taxon>Mimivirus</taxon>
        <taxon>Mimivirus bradfordmassiliense</taxon>
    </lineage>
</organism>
<accession>Q5UPY5</accession>